<sequence>MIYYVIALFVIAIDQISKWLIVKNMELGTSIPIIDNVLYITSHRNRGAAWGILENKMWFFYIITVVFVAFIVFYMKKYAKTDKLLGISLGLILGGAIGNFIDRVFRQEVVDFIHVYIFSYNYPVFNIADSALCIGVVLIIIQTLLEGKKTKE</sequence>
<organism>
    <name type="scientific">Bacillus cereus (strain ATCC 10987 / NRS 248)</name>
    <dbReference type="NCBI Taxonomy" id="222523"/>
    <lineage>
        <taxon>Bacteria</taxon>
        <taxon>Bacillati</taxon>
        <taxon>Bacillota</taxon>
        <taxon>Bacilli</taxon>
        <taxon>Bacillales</taxon>
        <taxon>Bacillaceae</taxon>
        <taxon>Bacillus</taxon>
        <taxon>Bacillus cereus group</taxon>
    </lineage>
</organism>
<evidence type="ECO:0000255" key="1">
    <source>
        <dbReference type="HAMAP-Rule" id="MF_00161"/>
    </source>
</evidence>
<comment type="function">
    <text evidence="1">This protein specifically catalyzes the removal of signal peptides from prolipoproteins.</text>
</comment>
<comment type="catalytic activity">
    <reaction evidence="1">
        <text>Release of signal peptides from bacterial membrane prolipoproteins. Hydrolyzes -Xaa-Yaa-Zaa-|-(S,diacylglyceryl)Cys-, in which Xaa is hydrophobic (preferably Leu), and Yaa (Ala or Ser) and Zaa (Gly or Ala) have small, neutral side chains.</text>
        <dbReference type="EC" id="3.4.23.36"/>
    </reaction>
</comment>
<comment type="pathway">
    <text evidence="1">Protein modification; lipoprotein biosynthesis (signal peptide cleavage).</text>
</comment>
<comment type="subcellular location">
    <subcellularLocation>
        <location evidence="1">Cell membrane</location>
        <topology evidence="1">Multi-pass membrane protein</topology>
    </subcellularLocation>
</comment>
<comment type="similarity">
    <text evidence="1">Belongs to the peptidase A8 family.</text>
</comment>
<protein>
    <recommendedName>
        <fullName evidence="1">Lipoprotein signal peptidase</fullName>
        <ecNumber evidence="1">3.4.23.36</ecNumber>
    </recommendedName>
    <alternativeName>
        <fullName evidence="1">Prolipoprotein signal peptidase</fullName>
    </alternativeName>
    <alternativeName>
        <fullName evidence="1">Signal peptidase II</fullName>
        <shortName evidence="1">SPase II</shortName>
    </alternativeName>
</protein>
<gene>
    <name evidence="1" type="primary">lspA</name>
    <name type="ordered locus">BCE_3938</name>
</gene>
<keyword id="KW-0064">Aspartyl protease</keyword>
<keyword id="KW-1003">Cell membrane</keyword>
<keyword id="KW-0378">Hydrolase</keyword>
<keyword id="KW-0472">Membrane</keyword>
<keyword id="KW-0645">Protease</keyword>
<keyword id="KW-0812">Transmembrane</keyword>
<keyword id="KW-1133">Transmembrane helix</keyword>
<feature type="chain" id="PRO_0000289350" description="Lipoprotein signal peptidase">
    <location>
        <begin position="1"/>
        <end position="152"/>
    </location>
</feature>
<feature type="transmembrane region" description="Helical" evidence="1">
    <location>
        <begin position="55"/>
        <end position="75"/>
    </location>
</feature>
<feature type="transmembrane region" description="Helical" evidence="1">
    <location>
        <begin position="85"/>
        <end position="105"/>
    </location>
</feature>
<feature type="transmembrane region" description="Helical" evidence="1">
    <location>
        <begin position="124"/>
        <end position="144"/>
    </location>
</feature>
<feature type="active site" evidence="1">
    <location>
        <position position="111"/>
    </location>
</feature>
<feature type="active site" evidence="1">
    <location>
        <position position="129"/>
    </location>
</feature>
<dbReference type="EC" id="3.4.23.36" evidence="1"/>
<dbReference type="EMBL" id="AE017194">
    <property type="protein sequence ID" value="AAS42841.1"/>
    <property type="molecule type" value="Genomic_DNA"/>
</dbReference>
<dbReference type="SMR" id="Q732H6"/>
<dbReference type="KEGG" id="bca:BCE_3938"/>
<dbReference type="HOGENOM" id="CLU_083252_3_0_9"/>
<dbReference type="UniPathway" id="UPA00665"/>
<dbReference type="Proteomes" id="UP000002527">
    <property type="component" value="Chromosome"/>
</dbReference>
<dbReference type="GO" id="GO:0005886">
    <property type="term" value="C:plasma membrane"/>
    <property type="evidence" value="ECO:0007669"/>
    <property type="project" value="UniProtKB-SubCell"/>
</dbReference>
<dbReference type="GO" id="GO:0004190">
    <property type="term" value="F:aspartic-type endopeptidase activity"/>
    <property type="evidence" value="ECO:0007669"/>
    <property type="project" value="UniProtKB-UniRule"/>
</dbReference>
<dbReference type="GO" id="GO:0006508">
    <property type="term" value="P:proteolysis"/>
    <property type="evidence" value="ECO:0007669"/>
    <property type="project" value="UniProtKB-KW"/>
</dbReference>
<dbReference type="HAMAP" id="MF_00161">
    <property type="entry name" value="LspA"/>
    <property type="match status" value="1"/>
</dbReference>
<dbReference type="InterPro" id="IPR001872">
    <property type="entry name" value="Peptidase_A8"/>
</dbReference>
<dbReference type="NCBIfam" id="TIGR00077">
    <property type="entry name" value="lspA"/>
    <property type="match status" value="1"/>
</dbReference>
<dbReference type="PANTHER" id="PTHR33695">
    <property type="entry name" value="LIPOPROTEIN SIGNAL PEPTIDASE"/>
    <property type="match status" value="1"/>
</dbReference>
<dbReference type="PANTHER" id="PTHR33695:SF1">
    <property type="entry name" value="LIPOPROTEIN SIGNAL PEPTIDASE"/>
    <property type="match status" value="1"/>
</dbReference>
<dbReference type="Pfam" id="PF01252">
    <property type="entry name" value="Peptidase_A8"/>
    <property type="match status" value="1"/>
</dbReference>
<dbReference type="PRINTS" id="PR00781">
    <property type="entry name" value="LIPOSIGPTASE"/>
</dbReference>
<dbReference type="PROSITE" id="PS00855">
    <property type="entry name" value="SPASE_II"/>
    <property type="match status" value="1"/>
</dbReference>
<accession>Q732H6</accession>
<name>LSPA_BACC1</name>
<reference key="1">
    <citation type="journal article" date="2004" name="Nucleic Acids Res.">
        <title>The genome sequence of Bacillus cereus ATCC 10987 reveals metabolic adaptations and a large plasmid related to Bacillus anthracis pXO1.</title>
        <authorList>
            <person name="Rasko D.A."/>
            <person name="Ravel J."/>
            <person name="Oekstad O.A."/>
            <person name="Helgason E."/>
            <person name="Cer R.Z."/>
            <person name="Jiang L."/>
            <person name="Shores K.A."/>
            <person name="Fouts D.E."/>
            <person name="Tourasse N.J."/>
            <person name="Angiuoli S.V."/>
            <person name="Kolonay J.F."/>
            <person name="Nelson W.C."/>
            <person name="Kolstoe A.-B."/>
            <person name="Fraser C.M."/>
            <person name="Read T.D."/>
        </authorList>
    </citation>
    <scope>NUCLEOTIDE SEQUENCE [LARGE SCALE GENOMIC DNA]</scope>
    <source>
        <strain>ATCC 10987 / NRS 248</strain>
    </source>
</reference>
<proteinExistence type="inferred from homology"/>